<geneLocation type="chloroplast"/>
<sequence>MQGRLSAWLVKHELVHRSLGFDYQGIETLQIKPEDWYSIAVISYVYGYNYLRSQCAYDVAPGGLLASVYHLTRIQYGVDQPEEVCIKVFAPRRNPRIPSVFWIWKSADFQERESYDMLGISYENHPRLKRILMPESWIGWPLRKDYIAPNFYEIQDAH</sequence>
<comment type="function">
    <text evidence="1">NDH shuttles electrons from NAD(P)H:plastoquinone, via FMN and iron-sulfur (Fe-S) centers, to quinones in the photosynthetic chain and possibly in a chloroplast respiratory chain. The immediate electron acceptor for the enzyme in this species is believed to be plastoquinone. Couples the redox reaction to proton translocation, and thus conserves the redox energy in a proton gradient.</text>
</comment>
<comment type="catalytic activity">
    <reaction evidence="1">
        <text>a plastoquinone + NADH + (n+1) H(+)(in) = a plastoquinol + NAD(+) + n H(+)(out)</text>
        <dbReference type="Rhea" id="RHEA:42608"/>
        <dbReference type="Rhea" id="RHEA-COMP:9561"/>
        <dbReference type="Rhea" id="RHEA-COMP:9562"/>
        <dbReference type="ChEBI" id="CHEBI:15378"/>
        <dbReference type="ChEBI" id="CHEBI:17757"/>
        <dbReference type="ChEBI" id="CHEBI:57540"/>
        <dbReference type="ChEBI" id="CHEBI:57945"/>
        <dbReference type="ChEBI" id="CHEBI:62192"/>
    </reaction>
</comment>
<comment type="catalytic activity">
    <reaction evidence="1">
        <text>a plastoquinone + NADPH + (n+1) H(+)(in) = a plastoquinol + NADP(+) + n H(+)(out)</text>
        <dbReference type="Rhea" id="RHEA:42612"/>
        <dbReference type="Rhea" id="RHEA-COMP:9561"/>
        <dbReference type="Rhea" id="RHEA-COMP:9562"/>
        <dbReference type="ChEBI" id="CHEBI:15378"/>
        <dbReference type="ChEBI" id="CHEBI:17757"/>
        <dbReference type="ChEBI" id="CHEBI:57783"/>
        <dbReference type="ChEBI" id="CHEBI:58349"/>
        <dbReference type="ChEBI" id="CHEBI:62192"/>
    </reaction>
</comment>
<comment type="subunit">
    <text evidence="1">NDH is composed of at least 16 different subunits, 5 of which are encoded in the nucleus.</text>
</comment>
<comment type="subcellular location">
    <subcellularLocation>
        <location evidence="1">Plastid</location>
        <location evidence="1">Chloroplast thylakoid membrane</location>
        <topology evidence="1">Peripheral membrane protein</topology>
        <orientation evidence="1">Stromal side</orientation>
    </subcellularLocation>
</comment>
<comment type="similarity">
    <text evidence="1">Belongs to the complex I 30 kDa subunit family.</text>
</comment>
<proteinExistence type="inferred from homology"/>
<reference key="1">
    <citation type="journal article" date="2006" name="BMC Evol. Biol.">
        <title>Complete plastid genome sequences of Drimys, Liriodendron, and Piper: implications for the phylogenetic relationships of magnoliids.</title>
        <authorList>
            <person name="Cai Z."/>
            <person name="Penaflor C."/>
            <person name="Kuehl J.V."/>
            <person name="Leebens-Mack J."/>
            <person name="Carlson J.E."/>
            <person name="dePamphilis C.W."/>
            <person name="Boore J.L."/>
            <person name="Jansen R.K."/>
        </authorList>
    </citation>
    <scope>NUCLEOTIDE SEQUENCE [LARGE SCALE GENOMIC DNA]</scope>
</reference>
<evidence type="ECO:0000255" key="1">
    <source>
        <dbReference type="HAMAP-Rule" id="MF_01357"/>
    </source>
</evidence>
<dbReference type="EC" id="7.1.1.-" evidence="1"/>
<dbReference type="EMBL" id="DQ887676">
    <property type="protein sequence ID" value="ABH88300.1"/>
    <property type="molecule type" value="Genomic_DNA"/>
</dbReference>
<dbReference type="RefSeq" id="YP_784389.1">
    <property type="nucleotide sequence ID" value="NC_008456.1"/>
</dbReference>
<dbReference type="SMR" id="Q06GZ4"/>
<dbReference type="GeneID" id="4363536"/>
<dbReference type="GO" id="GO:0009535">
    <property type="term" value="C:chloroplast thylakoid membrane"/>
    <property type="evidence" value="ECO:0007669"/>
    <property type="project" value="UniProtKB-SubCell"/>
</dbReference>
<dbReference type="GO" id="GO:0008137">
    <property type="term" value="F:NADH dehydrogenase (ubiquinone) activity"/>
    <property type="evidence" value="ECO:0007669"/>
    <property type="project" value="InterPro"/>
</dbReference>
<dbReference type="GO" id="GO:0048038">
    <property type="term" value="F:quinone binding"/>
    <property type="evidence" value="ECO:0007669"/>
    <property type="project" value="UniProtKB-KW"/>
</dbReference>
<dbReference type="GO" id="GO:0019684">
    <property type="term" value="P:photosynthesis, light reaction"/>
    <property type="evidence" value="ECO:0007669"/>
    <property type="project" value="UniProtKB-UniRule"/>
</dbReference>
<dbReference type="FunFam" id="3.30.460.80:FF:000004">
    <property type="entry name" value="NAD(P)H-quinone oxidoreductase subunit J, chloroplastic"/>
    <property type="match status" value="1"/>
</dbReference>
<dbReference type="Gene3D" id="3.30.460.80">
    <property type="entry name" value="NADH:ubiquinone oxidoreductase, 30kDa subunit"/>
    <property type="match status" value="1"/>
</dbReference>
<dbReference type="HAMAP" id="MF_01357">
    <property type="entry name" value="NDH1_NuoC"/>
    <property type="match status" value="1"/>
</dbReference>
<dbReference type="InterPro" id="IPR010218">
    <property type="entry name" value="NADH_DH_suC"/>
</dbReference>
<dbReference type="InterPro" id="IPR037232">
    <property type="entry name" value="NADH_quin_OxRdtase_su_C/D-like"/>
</dbReference>
<dbReference type="InterPro" id="IPR001268">
    <property type="entry name" value="NADH_UbQ_OxRdtase_30kDa_su"/>
</dbReference>
<dbReference type="InterPro" id="IPR020396">
    <property type="entry name" value="NADH_UbQ_OxRdtase_CS"/>
</dbReference>
<dbReference type="NCBIfam" id="NF009141">
    <property type="entry name" value="PRK12494.1"/>
    <property type="match status" value="1"/>
</dbReference>
<dbReference type="PANTHER" id="PTHR10884:SF14">
    <property type="entry name" value="NADH DEHYDROGENASE [UBIQUINONE] IRON-SULFUR PROTEIN 3, MITOCHONDRIAL"/>
    <property type="match status" value="1"/>
</dbReference>
<dbReference type="PANTHER" id="PTHR10884">
    <property type="entry name" value="NADH DEHYDROGENASE UBIQUINONE IRON-SULFUR PROTEIN 3"/>
    <property type="match status" value="1"/>
</dbReference>
<dbReference type="Pfam" id="PF00329">
    <property type="entry name" value="Complex1_30kDa"/>
    <property type="match status" value="1"/>
</dbReference>
<dbReference type="SUPFAM" id="SSF143243">
    <property type="entry name" value="Nqo5-like"/>
    <property type="match status" value="1"/>
</dbReference>
<dbReference type="PROSITE" id="PS00542">
    <property type="entry name" value="COMPLEX1_30K"/>
    <property type="match status" value="1"/>
</dbReference>
<gene>
    <name evidence="1" type="primary">ndhJ</name>
</gene>
<organism>
    <name type="scientific">Drimys granadensis</name>
    <dbReference type="NCBI Taxonomy" id="224735"/>
    <lineage>
        <taxon>Eukaryota</taxon>
        <taxon>Viridiplantae</taxon>
        <taxon>Streptophyta</taxon>
        <taxon>Embryophyta</taxon>
        <taxon>Tracheophyta</taxon>
        <taxon>Spermatophyta</taxon>
        <taxon>Magnoliopsida</taxon>
        <taxon>Magnoliidae</taxon>
        <taxon>Canellales</taxon>
        <taxon>Winteraceae</taxon>
        <taxon>Drimys</taxon>
    </lineage>
</organism>
<name>NDHJ_DRIGR</name>
<accession>Q06GZ4</accession>
<keyword id="KW-0150">Chloroplast</keyword>
<keyword id="KW-0472">Membrane</keyword>
<keyword id="KW-0520">NAD</keyword>
<keyword id="KW-0521">NADP</keyword>
<keyword id="KW-0934">Plastid</keyword>
<keyword id="KW-0618">Plastoquinone</keyword>
<keyword id="KW-0874">Quinone</keyword>
<keyword id="KW-0793">Thylakoid</keyword>
<keyword id="KW-1278">Translocase</keyword>
<keyword id="KW-0813">Transport</keyword>
<protein>
    <recommendedName>
        <fullName evidence="1">NAD(P)H-quinone oxidoreductase subunit J, chloroplastic</fullName>
        <ecNumber evidence="1">7.1.1.-</ecNumber>
    </recommendedName>
    <alternativeName>
        <fullName>NAD(P)H dehydrogenase subunit J</fullName>
    </alternativeName>
    <alternativeName>
        <fullName evidence="1">NADH-plastoquinone oxidoreductase subunit J</fullName>
    </alternativeName>
</protein>
<feature type="chain" id="PRO_0000358264" description="NAD(P)H-quinone oxidoreductase subunit J, chloroplastic">
    <location>
        <begin position="1"/>
        <end position="158"/>
    </location>
</feature>